<comment type="function">
    <text evidence="1">Catalyzes the hydrolysis of UDP-3-O-myristoyl-N-acetylglucosamine to form UDP-3-O-myristoylglucosamine and acetate, the committed step in lipid A biosynthesis.</text>
</comment>
<comment type="catalytic activity">
    <reaction evidence="1">
        <text>a UDP-3-O-[(3R)-3-hydroxyacyl]-N-acetyl-alpha-D-glucosamine + H2O = a UDP-3-O-[(3R)-3-hydroxyacyl]-alpha-D-glucosamine + acetate</text>
        <dbReference type="Rhea" id="RHEA:67816"/>
        <dbReference type="ChEBI" id="CHEBI:15377"/>
        <dbReference type="ChEBI" id="CHEBI:30089"/>
        <dbReference type="ChEBI" id="CHEBI:137740"/>
        <dbReference type="ChEBI" id="CHEBI:173225"/>
        <dbReference type="EC" id="3.5.1.108"/>
    </reaction>
</comment>
<comment type="cofactor">
    <cofactor evidence="1">
        <name>Zn(2+)</name>
        <dbReference type="ChEBI" id="CHEBI:29105"/>
    </cofactor>
</comment>
<comment type="pathway">
    <text evidence="1">Glycolipid biosynthesis; lipid IV(A) biosynthesis; lipid IV(A) from (3R)-3-hydroxytetradecanoyl-[acyl-carrier-protein] and UDP-N-acetyl-alpha-D-glucosamine: step 2/6.</text>
</comment>
<comment type="similarity">
    <text evidence="1">Belongs to the LpxC family.</text>
</comment>
<feature type="chain" id="PRO_1000134401" description="UDP-3-O-acyl-N-acetylglucosamine deacetylase">
    <location>
        <begin position="1"/>
        <end position="305"/>
    </location>
</feature>
<feature type="active site" description="Proton donor" evidence="1">
    <location>
        <position position="265"/>
    </location>
</feature>
<feature type="binding site" evidence="1">
    <location>
        <position position="79"/>
    </location>
    <ligand>
        <name>Zn(2+)</name>
        <dbReference type="ChEBI" id="CHEBI:29105"/>
    </ligand>
</feature>
<feature type="binding site" evidence="1">
    <location>
        <position position="238"/>
    </location>
    <ligand>
        <name>Zn(2+)</name>
        <dbReference type="ChEBI" id="CHEBI:29105"/>
    </ligand>
</feature>
<feature type="binding site" evidence="1">
    <location>
        <position position="242"/>
    </location>
    <ligand>
        <name>Zn(2+)</name>
        <dbReference type="ChEBI" id="CHEBI:29105"/>
    </ligand>
</feature>
<evidence type="ECO:0000255" key="1">
    <source>
        <dbReference type="HAMAP-Rule" id="MF_00388"/>
    </source>
</evidence>
<accession>C0Q5J2</accession>
<dbReference type="EC" id="3.5.1.108" evidence="1"/>
<dbReference type="EMBL" id="CP000857">
    <property type="protein sequence ID" value="ACN44334.1"/>
    <property type="molecule type" value="Genomic_DNA"/>
</dbReference>
<dbReference type="RefSeq" id="WP_000595487.1">
    <property type="nucleotide sequence ID" value="NC_012125.1"/>
</dbReference>
<dbReference type="SMR" id="C0Q5J2"/>
<dbReference type="KEGG" id="sei:SPC_0143"/>
<dbReference type="HOGENOM" id="CLU_046528_1_0_6"/>
<dbReference type="UniPathway" id="UPA00359">
    <property type="reaction ID" value="UER00478"/>
</dbReference>
<dbReference type="Proteomes" id="UP000001599">
    <property type="component" value="Chromosome"/>
</dbReference>
<dbReference type="GO" id="GO:0016020">
    <property type="term" value="C:membrane"/>
    <property type="evidence" value="ECO:0007669"/>
    <property type="project" value="GOC"/>
</dbReference>
<dbReference type="GO" id="GO:0046872">
    <property type="term" value="F:metal ion binding"/>
    <property type="evidence" value="ECO:0007669"/>
    <property type="project" value="UniProtKB-KW"/>
</dbReference>
<dbReference type="GO" id="GO:0103117">
    <property type="term" value="F:UDP-3-O-acyl-N-acetylglucosamine deacetylase activity"/>
    <property type="evidence" value="ECO:0007669"/>
    <property type="project" value="UniProtKB-UniRule"/>
</dbReference>
<dbReference type="GO" id="GO:0009245">
    <property type="term" value="P:lipid A biosynthetic process"/>
    <property type="evidence" value="ECO:0007669"/>
    <property type="project" value="UniProtKB-UniRule"/>
</dbReference>
<dbReference type="FunFam" id="3.30.1700.10:FF:000001">
    <property type="entry name" value="UDP-3-O-acyl-N-acetylglucosamine deacetylase"/>
    <property type="match status" value="1"/>
</dbReference>
<dbReference type="FunFam" id="3.30.230.20:FF:000001">
    <property type="entry name" value="UDP-3-O-acyl-N-acetylglucosamine deacetylase"/>
    <property type="match status" value="1"/>
</dbReference>
<dbReference type="Gene3D" id="3.30.230.20">
    <property type="entry name" value="lpxc deacetylase, domain 1"/>
    <property type="match status" value="1"/>
</dbReference>
<dbReference type="Gene3D" id="3.30.1700.10">
    <property type="entry name" value="lpxc deacetylase, domain 2"/>
    <property type="match status" value="1"/>
</dbReference>
<dbReference type="HAMAP" id="MF_00388">
    <property type="entry name" value="LpxC"/>
    <property type="match status" value="1"/>
</dbReference>
<dbReference type="InterPro" id="IPR020568">
    <property type="entry name" value="Ribosomal_Su5_D2-typ_SF"/>
</dbReference>
<dbReference type="InterPro" id="IPR004463">
    <property type="entry name" value="UDP-acyl_GlcNac_deAcase"/>
</dbReference>
<dbReference type="InterPro" id="IPR011334">
    <property type="entry name" value="UDP-acyl_GlcNac_deAcase_C"/>
</dbReference>
<dbReference type="InterPro" id="IPR015870">
    <property type="entry name" value="UDP-acyl_N-AcGlcN_deAcase_N"/>
</dbReference>
<dbReference type="NCBIfam" id="TIGR00325">
    <property type="entry name" value="lpxC"/>
    <property type="match status" value="1"/>
</dbReference>
<dbReference type="PANTHER" id="PTHR33694">
    <property type="entry name" value="UDP-3-O-ACYL-N-ACETYLGLUCOSAMINE DEACETYLASE 1, MITOCHONDRIAL-RELATED"/>
    <property type="match status" value="1"/>
</dbReference>
<dbReference type="PANTHER" id="PTHR33694:SF1">
    <property type="entry name" value="UDP-3-O-ACYL-N-ACETYLGLUCOSAMINE DEACETYLASE 1, MITOCHONDRIAL-RELATED"/>
    <property type="match status" value="1"/>
</dbReference>
<dbReference type="Pfam" id="PF03331">
    <property type="entry name" value="LpxC"/>
    <property type="match status" value="1"/>
</dbReference>
<dbReference type="SUPFAM" id="SSF54211">
    <property type="entry name" value="Ribosomal protein S5 domain 2-like"/>
    <property type="match status" value="2"/>
</dbReference>
<protein>
    <recommendedName>
        <fullName evidence="1">UDP-3-O-acyl-N-acetylglucosamine deacetylase</fullName>
        <shortName evidence="1">UDP-3-O-acyl-GlcNAc deacetylase</shortName>
        <ecNumber evidence="1">3.5.1.108</ecNumber>
    </recommendedName>
    <alternativeName>
        <fullName evidence="1">UDP-3-O-[R-3-hydroxymyristoyl]-N-acetylglucosamine deacetylase</fullName>
    </alternativeName>
</protein>
<sequence>MIKQRTLKRIVQATGVGLHTGKKVTLTLRPAPANTGVIYRRTDLNPPVDFPADAKSVRDTMLCTCLVNEHDVRISTVEHLNAALAGLGIDNIVIEVNAPEIPIMDGSAAPFVYLLLDAGIDELNCAKKFVRIKETVRVEDGDKWAEFRPYNGFTLDFTIDFNHPAIDSSSQRYAMNFSADAFMRQISRARTFGFMRDIEYLQSRGLCLGGSFDCAIVVDDYRVLNEDGLRFEDEFVRHKMLDAIGDLFMCGHNIIGAFTAYKSGHALNNKLLQAVLAKQEAWEFVTFQDDAELPLAFKAPSTVLA</sequence>
<reference key="1">
    <citation type="journal article" date="2009" name="PLoS ONE">
        <title>Salmonella paratyphi C: genetic divergence from Salmonella choleraesuis and pathogenic convergence with Salmonella typhi.</title>
        <authorList>
            <person name="Liu W.-Q."/>
            <person name="Feng Y."/>
            <person name="Wang Y."/>
            <person name="Zou Q.-H."/>
            <person name="Chen F."/>
            <person name="Guo J.-T."/>
            <person name="Peng Y.-H."/>
            <person name="Jin Y."/>
            <person name="Li Y.-G."/>
            <person name="Hu S.-N."/>
            <person name="Johnston R.N."/>
            <person name="Liu G.-R."/>
            <person name="Liu S.-L."/>
        </authorList>
    </citation>
    <scope>NUCLEOTIDE SEQUENCE [LARGE SCALE GENOMIC DNA]</scope>
    <source>
        <strain>RKS4594</strain>
    </source>
</reference>
<proteinExistence type="inferred from homology"/>
<organism>
    <name type="scientific">Salmonella paratyphi C (strain RKS4594)</name>
    <dbReference type="NCBI Taxonomy" id="476213"/>
    <lineage>
        <taxon>Bacteria</taxon>
        <taxon>Pseudomonadati</taxon>
        <taxon>Pseudomonadota</taxon>
        <taxon>Gammaproteobacteria</taxon>
        <taxon>Enterobacterales</taxon>
        <taxon>Enterobacteriaceae</taxon>
        <taxon>Salmonella</taxon>
    </lineage>
</organism>
<keyword id="KW-0378">Hydrolase</keyword>
<keyword id="KW-0441">Lipid A biosynthesis</keyword>
<keyword id="KW-0444">Lipid biosynthesis</keyword>
<keyword id="KW-0443">Lipid metabolism</keyword>
<keyword id="KW-0479">Metal-binding</keyword>
<keyword id="KW-0862">Zinc</keyword>
<gene>
    <name evidence="1" type="primary">lpxC</name>
    <name type="ordered locus">SPC_0143</name>
</gene>
<name>LPXC_SALPC</name>